<reference key="1">
    <citation type="journal article" date="2005" name="Extremophiles">
        <title>A thermostable phosphotriesterase from the archaeon Sulfolobus solfataricus: cloning, overexpression and properties.</title>
        <authorList>
            <person name="Merone L."/>
            <person name="Mandrich L."/>
            <person name="Rossi M."/>
            <person name="Manco G."/>
        </authorList>
    </citation>
    <scope>NUCLEOTIDE SEQUENCE [GENOMIC DNA]</scope>
    <scope>PROTEIN SEQUENCE OF 1-10</scope>
    <scope>FUNCTION</scope>
    <scope>CATALYTIC ACTIVITY</scope>
    <scope>ACTIVITY REGULATION</scope>
    <scope>BIOPHYSICOCHEMICAL PROPERTIES</scope>
    <source>
        <strain>DSM 5833 / MT-4</strain>
    </source>
</reference>
<reference key="2">
    <citation type="journal article" date="2001" name="Proc. Natl. Acad. Sci. U.S.A.">
        <title>The complete genome of the crenarchaeon Sulfolobus solfataricus P2.</title>
        <authorList>
            <person name="She Q."/>
            <person name="Singh R.K."/>
            <person name="Confalonieri F."/>
            <person name="Zivanovic Y."/>
            <person name="Allard G."/>
            <person name="Awayez M.J."/>
            <person name="Chan-Weiher C.C.-Y."/>
            <person name="Clausen I.G."/>
            <person name="Curtis B.A."/>
            <person name="De Moors A."/>
            <person name="Erauso G."/>
            <person name="Fletcher C."/>
            <person name="Gordon P.M.K."/>
            <person name="Heikamp-de Jong I."/>
            <person name="Jeffries A.C."/>
            <person name="Kozera C.J."/>
            <person name="Medina N."/>
            <person name="Peng X."/>
            <person name="Thi-Ngoc H.P."/>
            <person name="Redder P."/>
            <person name="Schenk M.E."/>
            <person name="Theriault C."/>
            <person name="Tolstrup N."/>
            <person name="Charlebois R.L."/>
            <person name="Doolittle W.F."/>
            <person name="Duguet M."/>
            <person name="Gaasterland T."/>
            <person name="Garrett R.A."/>
            <person name="Ragan M.A."/>
            <person name="Sensen C.W."/>
            <person name="Van der Oost J."/>
        </authorList>
    </citation>
    <scope>NUCLEOTIDE SEQUENCE [LARGE SCALE GENOMIC DNA]</scope>
    <source>
        <strain>ATCC 35092 / DSM 1617 / JCM 11322 / P2</strain>
    </source>
</reference>
<reference key="3">
    <citation type="journal article" date="2008" name="J. Mol. Biol.">
        <title>Structural basis for natural lactonase and promiscuous phosphotriesterase activities.</title>
        <authorList>
            <person name="Elias M."/>
            <person name="Dupuy J."/>
            <person name="Merone L."/>
            <person name="Mandrich L."/>
            <person name="Porzio E."/>
            <person name="Moniot S."/>
            <person name="Rochu D."/>
            <person name="Lecomte C."/>
            <person name="Rossi M."/>
            <person name="Masson P."/>
            <person name="Manco G."/>
            <person name="Chabriere E."/>
        </authorList>
    </citation>
    <scope>X-RAY CRYSTALLOGRAPHY (2.6 ANGSTROMS)</scope>
    <scope>COFACTOR</scope>
    <scope>METAL-BINDING SITES</scope>
    <scope>SUBUNIT</scope>
    <scope>CARBOXYLATION AT LYS-137</scope>
    <source>
        <strain>DSM 5833 / MT-4</strain>
    </source>
</reference>
<feature type="chain" id="PRO_0000388684" description="Aryldialkylphosphatase">
    <location>
        <begin position="1"/>
        <end position="314"/>
    </location>
</feature>
<feature type="binding site" evidence="3 4 5 6 7 8 9 10 11 12 13">
    <location>
        <position position="22"/>
    </location>
    <ligand>
        <name>Fe cation</name>
        <dbReference type="ChEBI" id="CHEBI:24875"/>
    </ligand>
</feature>
<feature type="binding site" evidence="3 4 5 6 7 8 9 10 11 12 13">
    <location>
        <position position="24"/>
    </location>
    <ligand>
        <name>Fe cation</name>
        <dbReference type="ChEBI" id="CHEBI:24875"/>
    </ligand>
</feature>
<feature type="binding site" description="via carbamate group" evidence="3 4 5 6 7 8 9 10 11 12 13">
    <location>
        <position position="137"/>
    </location>
    <ligand>
        <name>Co(2+)</name>
        <dbReference type="ChEBI" id="CHEBI:48828"/>
    </ligand>
</feature>
<feature type="binding site" description="via carbamate group" evidence="3 4 5 6 7 8 9 10 11 12 13">
    <location>
        <position position="137"/>
    </location>
    <ligand>
        <name>Fe cation</name>
        <dbReference type="ChEBI" id="CHEBI:24875"/>
    </ligand>
</feature>
<feature type="binding site" evidence="3 4 5 6 7 8 9 10 11 12 13">
    <location>
        <position position="170"/>
    </location>
    <ligand>
        <name>Co(2+)</name>
        <dbReference type="ChEBI" id="CHEBI:48828"/>
    </ligand>
</feature>
<feature type="binding site" evidence="3 4 5 6 7 8 9 10 11 12 13">
    <location>
        <position position="199"/>
    </location>
    <ligand>
        <name>Co(2+)</name>
        <dbReference type="ChEBI" id="CHEBI:48828"/>
    </ligand>
</feature>
<feature type="binding site" evidence="3 4 5 6 7 8 9 10 11 12 13">
    <location>
        <position position="256"/>
    </location>
    <ligand>
        <name>Fe cation</name>
        <dbReference type="ChEBI" id="CHEBI:24875"/>
    </ligand>
</feature>
<feature type="modified residue" description="N6-carboxylysine" evidence="1 3 4 5 6 7 8 9 10 11 12 13">
    <location>
        <position position="137"/>
    </location>
</feature>
<feature type="strand" evidence="16">
    <location>
        <begin position="3"/>
        <end position="5"/>
    </location>
</feature>
<feature type="strand" evidence="16">
    <location>
        <begin position="8"/>
        <end position="11"/>
    </location>
</feature>
<feature type="helix" evidence="16">
    <location>
        <begin position="13"/>
        <end position="15"/>
    </location>
</feature>
<feature type="strand" evidence="16">
    <location>
        <begin position="18"/>
        <end position="22"/>
    </location>
</feature>
<feature type="helix" evidence="16">
    <location>
        <begin position="30"/>
        <end position="35"/>
    </location>
</feature>
<feature type="helix" evidence="16">
    <location>
        <begin position="37"/>
        <end position="39"/>
    </location>
</feature>
<feature type="helix" evidence="16">
    <location>
        <begin position="42"/>
        <end position="58"/>
    </location>
</feature>
<feature type="strand" evidence="16">
    <location>
        <begin position="63"/>
        <end position="66"/>
    </location>
</feature>
<feature type="turn" evidence="16">
    <location>
        <begin position="71"/>
        <end position="73"/>
    </location>
</feature>
<feature type="helix" evidence="16">
    <location>
        <begin position="76"/>
        <end position="86"/>
    </location>
</feature>
<feature type="strand" evidence="16">
    <location>
        <begin position="89"/>
        <end position="92"/>
    </location>
</feature>
<feature type="strand" evidence="16">
    <location>
        <begin position="94"/>
        <end position="96"/>
    </location>
</feature>
<feature type="helix" evidence="16">
    <location>
        <begin position="104"/>
        <end position="106"/>
    </location>
</feature>
<feature type="helix" evidence="16">
    <location>
        <begin position="111"/>
        <end position="123"/>
    </location>
</feature>
<feature type="strand" evidence="14">
    <location>
        <begin position="126"/>
        <end position="130"/>
    </location>
</feature>
<feature type="strand" evidence="16">
    <location>
        <begin position="135"/>
        <end position="139"/>
    </location>
</feature>
<feature type="helix" evidence="16">
    <location>
        <begin position="147"/>
        <end position="163"/>
    </location>
</feature>
<feature type="strand" evidence="16">
    <location>
        <begin position="167"/>
        <end position="170"/>
    </location>
</feature>
<feature type="turn" evidence="16">
    <location>
        <begin position="173"/>
        <end position="176"/>
    </location>
</feature>
<feature type="helix" evidence="16">
    <location>
        <begin position="177"/>
        <end position="187"/>
    </location>
</feature>
<feature type="helix" evidence="16">
    <location>
        <begin position="192"/>
        <end position="194"/>
    </location>
</feature>
<feature type="strand" evidence="16">
    <location>
        <begin position="195"/>
        <end position="197"/>
    </location>
</feature>
<feature type="helix" evidence="16">
    <location>
        <begin position="200"/>
        <end position="202"/>
    </location>
</feature>
<feature type="helix" evidence="16">
    <location>
        <begin position="206"/>
        <end position="214"/>
    </location>
</feature>
<feature type="strand" evidence="16">
    <location>
        <begin position="218"/>
        <end position="221"/>
    </location>
</feature>
<feature type="turn" evidence="16">
    <location>
        <begin position="227"/>
        <end position="229"/>
    </location>
</feature>
<feature type="helix" evidence="16">
    <location>
        <begin position="232"/>
        <end position="244"/>
    </location>
</feature>
<feature type="helix" evidence="16">
    <location>
        <begin position="248"/>
        <end position="250"/>
    </location>
</feature>
<feature type="strand" evidence="16">
    <location>
        <begin position="251"/>
        <end position="253"/>
    </location>
</feature>
<feature type="strand" evidence="16">
    <location>
        <begin position="258"/>
        <end position="261"/>
    </location>
</feature>
<feature type="helix" evidence="15">
    <location>
        <begin position="264"/>
        <end position="266"/>
    </location>
</feature>
<feature type="helix" evidence="15">
    <location>
        <begin position="268"/>
        <end position="270"/>
    </location>
</feature>
<feature type="helix" evidence="15">
    <location>
        <begin position="271"/>
        <end position="274"/>
    </location>
</feature>
<feature type="strand" evidence="16">
    <location>
        <begin position="279"/>
        <end position="281"/>
    </location>
</feature>
<feature type="helix" evidence="16">
    <location>
        <begin position="282"/>
        <end position="285"/>
    </location>
</feature>
<feature type="helix" evidence="16">
    <location>
        <begin position="287"/>
        <end position="293"/>
    </location>
</feature>
<feature type="helix" evidence="16">
    <location>
        <begin position="298"/>
        <end position="305"/>
    </location>
</feature>
<feature type="helix" evidence="16">
    <location>
        <begin position="307"/>
        <end position="312"/>
    </location>
</feature>
<dbReference type="EC" id="3.1.8.1"/>
<dbReference type="EMBL" id="AE006641">
    <property type="protein sequence ID" value="AAK42653.1"/>
    <property type="molecule type" value="Genomic_DNA"/>
</dbReference>
<dbReference type="EMBL" id="AY775568">
    <property type="protein sequence ID" value="AAW47234.1"/>
    <property type="molecule type" value="Genomic_DNA"/>
</dbReference>
<dbReference type="PIR" id="F90424">
    <property type="entry name" value="F90424"/>
</dbReference>
<dbReference type="RefSeq" id="WP_009988477.1">
    <property type="nucleotide sequence ID" value="NC_002754.1"/>
</dbReference>
<dbReference type="PDB" id="2VC5">
    <property type="method" value="X-ray"/>
    <property type="resolution" value="2.60 A"/>
    <property type="chains" value="A/B/C/D=1-314"/>
</dbReference>
<dbReference type="PDB" id="2VC7">
    <property type="method" value="X-ray"/>
    <property type="resolution" value="2.05 A"/>
    <property type="chains" value="A/B/C/D=1-314"/>
</dbReference>
<dbReference type="PDB" id="3UF9">
    <property type="method" value="X-ray"/>
    <property type="resolution" value="2.68 A"/>
    <property type="chains" value="A/B/C/D=1-314"/>
</dbReference>
<dbReference type="PDB" id="4KER">
    <property type="method" value="X-ray"/>
    <property type="resolution" value="2.60 A"/>
    <property type="chains" value="A/B/C/D=1-314"/>
</dbReference>
<dbReference type="PDB" id="4KES">
    <property type="method" value="X-ray"/>
    <property type="resolution" value="2.10 A"/>
    <property type="chains" value="A/B/C/D=1-314"/>
</dbReference>
<dbReference type="PDB" id="4KET">
    <property type="method" value="X-ray"/>
    <property type="resolution" value="2.00 A"/>
    <property type="chains" value="A/B/C/D=1-314"/>
</dbReference>
<dbReference type="PDB" id="4KEU">
    <property type="method" value="X-ray"/>
    <property type="resolution" value="2.20 A"/>
    <property type="chains" value="A/B/C/D=1-314"/>
</dbReference>
<dbReference type="PDB" id="4KEV">
    <property type="method" value="X-ray"/>
    <property type="resolution" value="2.65 A"/>
    <property type="chains" value="A/B/C/D=1-314"/>
</dbReference>
<dbReference type="PDB" id="4KEZ">
    <property type="method" value="X-ray"/>
    <property type="resolution" value="1.85 A"/>
    <property type="chains" value="A/B/C/D=1-314"/>
</dbReference>
<dbReference type="PDB" id="4KF1">
    <property type="method" value="X-ray"/>
    <property type="resolution" value="2.00 A"/>
    <property type="chains" value="A/B/C/D=1-314"/>
</dbReference>
<dbReference type="PDB" id="5VRI">
    <property type="method" value="X-ray"/>
    <property type="resolution" value="2.15 A"/>
    <property type="chains" value="A/B/C/D=1-314"/>
</dbReference>
<dbReference type="PDB" id="5VRK">
    <property type="method" value="X-ray"/>
    <property type="resolution" value="1.40 A"/>
    <property type="chains" value="A/B=1-314"/>
</dbReference>
<dbReference type="PDB" id="5VSA">
    <property type="method" value="X-ray"/>
    <property type="resolution" value="2.00 A"/>
    <property type="chains" value="A/B/C/D=1-314"/>
</dbReference>
<dbReference type="PDB" id="5W3U">
    <property type="method" value="X-ray"/>
    <property type="resolution" value="2.50 A"/>
    <property type="chains" value="A/B/C/D=1-314"/>
</dbReference>
<dbReference type="PDB" id="5W3W">
    <property type="method" value="X-ray"/>
    <property type="resolution" value="2.95 A"/>
    <property type="chains" value="A/B/C/D=1-314"/>
</dbReference>
<dbReference type="PDB" id="5W3Z">
    <property type="method" value="X-ray"/>
    <property type="resolution" value="2.55 A"/>
    <property type="chains" value="A/B/C/D=1-314"/>
</dbReference>
<dbReference type="PDB" id="8SF2">
    <property type="method" value="X-ray"/>
    <property type="resolution" value="1.50 A"/>
    <property type="chains" value="D=1-314"/>
</dbReference>
<dbReference type="PDB" id="8SF9">
    <property type="method" value="X-ray"/>
    <property type="resolution" value="1.80 A"/>
    <property type="chains" value="D=1-314"/>
</dbReference>
<dbReference type="PDB" id="8SFA">
    <property type="method" value="X-ray"/>
    <property type="resolution" value="2.32 A"/>
    <property type="chains" value="D/S/b/t=1-314"/>
</dbReference>
<dbReference type="PDB" id="8SFB">
    <property type="method" value="X-ray"/>
    <property type="resolution" value="1.40 A"/>
    <property type="chains" value="D=1-314"/>
</dbReference>
<dbReference type="PDB" id="8SFC">
    <property type="method" value="X-ray"/>
    <property type="resolution" value="1.40 A"/>
    <property type="chains" value="D=1-314"/>
</dbReference>
<dbReference type="PDB" id="8SFD">
    <property type="method" value="X-ray"/>
    <property type="resolution" value="1.50 A"/>
    <property type="chains" value="D=1-314"/>
</dbReference>
<dbReference type="PDB" id="8SFK">
    <property type="method" value="X-ray"/>
    <property type="resolution" value="1.40 A"/>
    <property type="chains" value="D=1-314"/>
</dbReference>
<dbReference type="PDB" id="8SFM">
    <property type="method" value="X-ray"/>
    <property type="resolution" value="1.50 A"/>
    <property type="chains" value="D=1-314"/>
</dbReference>
<dbReference type="PDBsum" id="2VC5"/>
<dbReference type="PDBsum" id="2VC7"/>
<dbReference type="PDBsum" id="3UF9"/>
<dbReference type="PDBsum" id="4KER"/>
<dbReference type="PDBsum" id="4KES"/>
<dbReference type="PDBsum" id="4KET"/>
<dbReference type="PDBsum" id="4KEU"/>
<dbReference type="PDBsum" id="4KEV"/>
<dbReference type="PDBsum" id="4KEZ"/>
<dbReference type="PDBsum" id="4KF1"/>
<dbReference type="PDBsum" id="5VRI"/>
<dbReference type="PDBsum" id="5VRK"/>
<dbReference type="PDBsum" id="5VSA"/>
<dbReference type="PDBsum" id="5W3U"/>
<dbReference type="PDBsum" id="5W3W"/>
<dbReference type="PDBsum" id="5W3Z"/>
<dbReference type="PDBsum" id="8SF2"/>
<dbReference type="PDBsum" id="8SF9"/>
<dbReference type="PDBsum" id="8SFA"/>
<dbReference type="PDBsum" id="8SFB"/>
<dbReference type="PDBsum" id="8SFC"/>
<dbReference type="PDBsum" id="8SFD"/>
<dbReference type="PDBsum" id="8SFK"/>
<dbReference type="PDBsum" id="8SFM"/>
<dbReference type="SMR" id="Q97VT7"/>
<dbReference type="FunCoup" id="Q97VT7">
    <property type="interactions" value="27"/>
</dbReference>
<dbReference type="STRING" id="273057.SSO2522"/>
<dbReference type="PaxDb" id="273057-SSO2522"/>
<dbReference type="EnsemblBacteria" id="AAK42653">
    <property type="protein sequence ID" value="AAK42653"/>
    <property type="gene ID" value="SSO2522"/>
</dbReference>
<dbReference type="GeneID" id="44128246"/>
<dbReference type="KEGG" id="sso:SSO2522"/>
<dbReference type="PATRIC" id="fig|273057.12.peg.2599"/>
<dbReference type="eggNOG" id="arCOG07263">
    <property type="taxonomic scope" value="Archaea"/>
</dbReference>
<dbReference type="HOGENOM" id="CLU_054760_1_0_2"/>
<dbReference type="InParanoid" id="Q97VT7"/>
<dbReference type="PhylomeDB" id="Q97VT7"/>
<dbReference type="BRENDA" id="3.1.1.25">
    <property type="organism ID" value="6163"/>
</dbReference>
<dbReference type="BRENDA" id="3.1.1.81">
    <property type="organism ID" value="6163"/>
</dbReference>
<dbReference type="BRENDA" id="3.1.8.1">
    <property type="organism ID" value="6163"/>
</dbReference>
<dbReference type="EvolutionaryTrace" id="Q97VT7"/>
<dbReference type="PRO" id="PR:Q97VT7"/>
<dbReference type="Proteomes" id="UP000001974">
    <property type="component" value="Chromosome"/>
</dbReference>
<dbReference type="GO" id="GO:0004063">
    <property type="term" value="F:aryldialkylphosphatase activity"/>
    <property type="evidence" value="ECO:0007669"/>
    <property type="project" value="UniProtKB-EC"/>
</dbReference>
<dbReference type="GO" id="GO:0008270">
    <property type="term" value="F:zinc ion binding"/>
    <property type="evidence" value="ECO:0007669"/>
    <property type="project" value="InterPro"/>
</dbReference>
<dbReference type="GO" id="GO:0009056">
    <property type="term" value="P:catabolic process"/>
    <property type="evidence" value="ECO:0007669"/>
    <property type="project" value="InterPro"/>
</dbReference>
<dbReference type="CDD" id="cd00530">
    <property type="entry name" value="PTE"/>
    <property type="match status" value="1"/>
</dbReference>
<dbReference type="Gene3D" id="3.20.20.140">
    <property type="entry name" value="Metal-dependent hydrolases"/>
    <property type="match status" value="1"/>
</dbReference>
<dbReference type="InterPro" id="IPR017947">
    <property type="entry name" value="AryldialkylPase_Zn-BS"/>
</dbReference>
<dbReference type="InterPro" id="IPR032466">
    <property type="entry name" value="Metal_Hydrolase"/>
</dbReference>
<dbReference type="InterPro" id="IPR001559">
    <property type="entry name" value="Phosphotriesterase"/>
</dbReference>
<dbReference type="PANTHER" id="PTHR10819">
    <property type="entry name" value="PHOSPHOTRIESTERASE-RELATED"/>
    <property type="match status" value="1"/>
</dbReference>
<dbReference type="PANTHER" id="PTHR10819:SF3">
    <property type="entry name" value="PHOSPHOTRIESTERASE-RELATED PROTEIN"/>
    <property type="match status" value="1"/>
</dbReference>
<dbReference type="Pfam" id="PF02126">
    <property type="entry name" value="PTE"/>
    <property type="match status" value="1"/>
</dbReference>
<dbReference type="PIRSF" id="PIRSF016839">
    <property type="entry name" value="PhP"/>
    <property type="match status" value="1"/>
</dbReference>
<dbReference type="SUPFAM" id="SSF51556">
    <property type="entry name" value="Metallo-dependent hydrolases"/>
    <property type="match status" value="1"/>
</dbReference>
<dbReference type="PROSITE" id="PS01322">
    <property type="entry name" value="PHOSPHOTRIESTERASE_1"/>
    <property type="match status" value="1"/>
</dbReference>
<dbReference type="PROSITE" id="PS51347">
    <property type="entry name" value="PHOSPHOTRIESTERASE_2"/>
    <property type="match status" value="1"/>
</dbReference>
<gene>
    <name type="primary">php</name>
    <name type="ordered locus">SSO2522</name>
</gene>
<proteinExistence type="evidence at protein level"/>
<accession>Q97VT7</accession>
<name>PHP_SACS2</name>
<protein>
    <recommendedName>
        <fullName>Aryldialkylphosphatase</fullName>
        <ecNumber>3.1.8.1</ecNumber>
    </recommendedName>
    <alternativeName>
        <fullName>Paraoxonase</fullName>
        <shortName>SsoPox</shortName>
    </alternativeName>
    <alternativeName>
        <fullName>Phosphotriesterase-like lactonase</fullName>
    </alternativeName>
</protein>
<keyword id="KW-0002">3D-structure</keyword>
<keyword id="KW-0170">Cobalt</keyword>
<keyword id="KW-0903">Direct protein sequencing</keyword>
<keyword id="KW-0378">Hydrolase</keyword>
<keyword id="KW-0408">Iron</keyword>
<keyword id="KW-0479">Metal-binding</keyword>
<keyword id="KW-1185">Reference proteome</keyword>
<sequence>MRIPLVGKDSIESKDIGFTLIHEHLRVFSEAVRQQWPHLYNEDEEFRNAVNEVKRAMQFGVKTIVDPTVMGLGRDIRFMEKVVKATGINLVAGTGIYIYIDLPFYFLNRSIDEIADLFIHDIKEGIQGTLNKAGFVKIAADEPGITKDVEKVIRAAAIANKETKVPIITHSNAHNNTGLEQQRILTEEGVDPGKILIGHLGDTDNIDYIKKIADKGSFIGLDRYGLDLFLPVDKRNETTLRLIKDGYSDKIMISHDYCCTIDWGTAKPEYKPKLAPRWSITLIFEDTIPFLKRNGVNEEVIATIFKENPKKFFS</sequence>
<comment type="function">
    <text evidence="2">Has a low paraoxonase activity. Also active, but with a lower activity, against other organo-phosphorus insecticides such as Dursban, Coumaphos, pNP-butanoate or parathion.</text>
</comment>
<comment type="catalytic activity">
    <reaction evidence="2">
        <text>An aryl dialkyl phosphate + H2O = dialkyl phosphate + an aryl alcohol.</text>
        <dbReference type="EC" id="3.1.8.1"/>
    </reaction>
</comment>
<comment type="cofactor">
    <cofactor evidence="3">
        <name>Co(2+)</name>
        <dbReference type="ChEBI" id="CHEBI:48828"/>
    </cofactor>
    <text evidence="3">Binds 1 Co(2+) ion per subunit.</text>
</comment>
<comment type="cofactor">
    <cofactor evidence="3">
        <name>Fe cation</name>
        <dbReference type="ChEBI" id="CHEBI:24875"/>
    </cofactor>
    <text evidence="3">Binds 1 Fe cation per subunit.</text>
</comment>
<comment type="activity regulation">
    <text evidence="2">Inactivated by EDTA and o-phenanthroline.</text>
</comment>
<comment type="biophysicochemical properties">
    <kinetics>
        <KM evidence="2">0.06 mM for paraoxon (at pH 8.0)</KM>
        <KM evidence="2">0.205 mM for methyl-paraoxon (at pH 8.0)</KM>
    </kinetics>
    <phDependence>
        <text evidence="2">Optimum pH is 7.0-9.0.</text>
    </phDependence>
    <temperatureDependence>
        <text evidence="2">Thermostable.</text>
    </temperatureDependence>
</comment>
<comment type="subunit">
    <text evidence="3">Homodimer.</text>
</comment>
<comment type="similarity">
    <text evidence="1">Belongs to the metallo-dependent hydrolases superfamily. Phosphotriesterase family.</text>
</comment>
<evidence type="ECO:0000255" key="1">
    <source>
        <dbReference type="PROSITE-ProRule" id="PRU00679"/>
    </source>
</evidence>
<evidence type="ECO:0000269" key="2">
    <source>
    </source>
</evidence>
<evidence type="ECO:0000269" key="3">
    <source>
    </source>
</evidence>
<evidence type="ECO:0007744" key="4">
    <source>
        <dbReference type="PDB" id="2VC5"/>
    </source>
</evidence>
<evidence type="ECO:0007744" key="5">
    <source>
        <dbReference type="PDB" id="2VC7"/>
    </source>
</evidence>
<evidence type="ECO:0007744" key="6">
    <source>
        <dbReference type="PDB" id="3UF9"/>
    </source>
</evidence>
<evidence type="ECO:0007744" key="7">
    <source>
        <dbReference type="PDB" id="4KER"/>
    </source>
</evidence>
<evidence type="ECO:0007744" key="8">
    <source>
        <dbReference type="PDB" id="4KES"/>
    </source>
</evidence>
<evidence type="ECO:0007744" key="9">
    <source>
        <dbReference type="PDB" id="4KET"/>
    </source>
</evidence>
<evidence type="ECO:0007744" key="10">
    <source>
        <dbReference type="PDB" id="4KEU"/>
    </source>
</evidence>
<evidence type="ECO:0007744" key="11">
    <source>
        <dbReference type="PDB" id="4KEV"/>
    </source>
</evidence>
<evidence type="ECO:0007744" key="12">
    <source>
        <dbReference type="PDB" id="4KEZ"/>
    </source>
</evidence>
<evidence type="ECO:0007744" key="13">
    <source>
        <dbReference type="PDB" id="4KF1"/>
    </source>
</evidence>
<evidence type="ECO:0007829" key="14">
    <source>
        <dbReference type="PDB" id="2VC7"/>
    </source>
</evidence>
<evidence type="ECO:0007829" key="15">
    <source>
        <dbReference type="PDB" id="4KEZ"/>
    </source>
</evidence>
<evidence type="ECO:0007829" key="16">
    <source>
        <dbReference type="PDB" id="5VRK"/>
    </source>
</evidence>
<organism>
    <name type="scientific">Saccharolobus solfataricus (strain ATCC 35092 / DSM 1617 / JCM 11322 / P2)</name>
    <name type="common">Sulfolobus solfataricus</name>
    <dbReference type="NCBI Taxonomy" id="273057"/>
    <lineage>
        <taxon>Archaea</taxon>
        <taxon>Thermoproteota</taxon>
        <taxon>Thermoprotei</taxon>
        <taxon>Sulfolobales</taxon>
        <taxon>Sulfolobaceae</taxon>
        <taxon>Saccharolobus</taxon>
    </lineage>
</organism>